<name>GLPA_PIG</name>
<accession>P02725</accession>
<dbReference type="PIR" id="A91958">
    <property type="entry name" value="GFPGE"/>
</dbReference>
<dbReference type="SMR" id="P02725"/>
<dbReference type="FunCoup" id="P02725">
    <property type="interactions" value="3"/>
</dbReference>
<dbReference type="STRING" id="9823.ENSSSCP00000029922"/>
<dbReference type="GlyCosmos" id="P02725">
    <property type="glycosylation" value="12 sites, No reported glycans"/>
</dbReference>
<dbReference type="GlyGen" id="P02725">
    <property type="glycosylation" value="12 sites"/>
</dbReference>
<dbReference type="iPTMnet" id="P02725"/>
<dbReference type="InParanoid" id="P02725"/>
<dbReference type="Proteomes" id="UP000008227">
    <property type="component" value="Unplaced"/>
</dbReference>
<dbReference type="Proteomes" id="UP000314985">
    <property type="component" value="Unplaced"/>
</dbReference>
<dbReference type="Proteomes" id="UP000694570">
    <property type="component" value="Unplaced"/>
</dbReference>
<dbReference type="Proteomes" id="UP000694571">
    <property type="component" value="Unplaced"/>
</dbReference>
<dbReference type="Proteomes" id="UP000694720">
    <property type="component" value="Unplaced"/>
</dbReference>
<dbReference type="Proteomes" id="UP000694722">
    <property type="component" value="Unplaced"/>
</dbReference>
<dbReference type="Proteomes" id="UP000694723">
    <property type="component" value="Unplaced"/>
</dbReference>
<dbReference type="Proteomes" id="UP000694724">
    <property type="component" value="Unplaced"/>
</dbReference>
<dbReference type="Proteomes" id="UP000694725">
    <property type="component" value="Unplaced"/>
</dbReference>
<dbReference type="Proteomes" id="UP000694726">
    <property type="component" value="Unplaced"/>
</dbReference>
<dbReference type="Proteomes" id="UP000694727">
    <property type="component" value="Unplaced"/>
</dbReference>
<dbReference type="Proteomes" id="UP000694728">
    <property type="component" value="Unplaced"/>
</dbReference>
<dbReference type="GO" id="GO:0170014">
    <property type="term" value="C:ankyrin-1 complex"/>
    <property type="evidence" value="ECO:0000250"/>
    <property type="project" value="UniProtKB"/>
</dbReference>
<dbReference type="GO" id="GO:0005886">
    <property type="term" value="C:plasma membrane"/>
    <property type="evidence" value="ECO:0000318"/>
    <property type="project" value="GO_Central"/>
</dbReference>
<dbReference type="Gene3D" id="1.20.5.70">
    <property type="match status" value="1"/>
</dbReference>
<dbReference type="InterPro" id="IPR001195">
    <property type="entry name" value="Glycophorin"/>
</dbReference>
<dbReference type="InterPro" id="IPR018938">
    <property type="entry name" value="Glycophorin_CS"/>
</dbReference>
<dbReference type="InterPro" id="IPR049535">
    <property type="entry name" value="GYPA_B"/>
</dbReference>
<dbReference type="PANTHER" id="PTHR13813">
    <property type="entry name" value="GLYCOPHORIN"/>
    <property type="match status" value="1"/>
</dbReference>
<dbReference type="PANTHER" id="PTHR13813:SF3">
    <property type="entry name" value="GLYCOPHORIN-A"/>
    <property type="match status" value="1"/>
</dbReference>
<dbReference type="Pfam" id="PF01102">
    <property type="entry name" value="Glycophorin_A"/>
    <property type="match status" value="1"/>
</dbReference>
<dbReference type="PIRSF" id="PIRSF002466">
    <property type="entry name" value="Glycophorin"/>
    <property type="match status" value="1"/>
</dbReference>
<dbReference type="PROSITE" id="PS00312">
    <property type="entry name" value="GLYCOPHORIN_A"/>
    <property type="match status" value="1"/>
</dbReference>
<reference key="1">
    <citation type="journal article" date="1980" name="J. Biochem.">
        <title>Amino acid sequence and attachment sites of oligosaccharide units of porcine erythrocyte glycophorin.</title>
        <authorList>
            <person name="Honma K."/>
            <person name="Tomita M."/>
            <person name="Hamada A."/>
        </authorList>
    </citation>
    <scope>PROTEIN SEQUENCE OF 1-43 AND 47-106</scope>
</reference>
<reference key="2">
    <citation type="journal article" date="1979" name="Biochim. Biophys. Acta">
        <title>Partial amino acid sequence of glycophorin from porcine erythrocyte membranes.</title>
        <authorList>
            <person name="Honma K."/>
            <person name="Tomita M."/>
            <person name="Hamada A."/>
        </authorList>
    </citation>
    <scope>PROTEIN SEQUENCE OF 36-54 AND 98-133</scope>
</reference>
<proteinExistence type="evidence at protein level"/>
<protein>
    <recommendedName>
        <fullName evidence="1">Glycophorin-A</fullName>
    </recommendedName>
    <cdAntigenName>CD235a</cdAntigenName>
</protein>
<gene>
    <name evidence="1" type="primary">GYPA</name>
</gene>
<sequence>TETPVTGEQGSATPGNVSNATVTAGKPSATSPGVMTIKNTTAVVQKETGVPESYHQDFSHAEITGIIFAVMAGLLLIIFLIAYLIRRMIKKPLPVPKPQDSPDIGTENTADPSELQDTEDPPLTSVEIETPAS</sequence>
<evidence type="ECO:0000250" key="1">
    <source>
        <dbReference type="UniProtKB" id="P02724"/>
    </source>
</evidence>
<evidence type="ECO:0000256" key="2">
    <source>
        <dbReference type="SAM" id="MobiDB-lite"/>
    </source>
</evidence>
<evidence type="ECO:0000269" key="3">
    <source>
    </source>
</evidence>
<evidence type="ECO:0000305" key="4"/>
<keyword id="KW-0903">Direct protein sequencing</keyword>
<keyword id="KW-0325">Glycoprotein</keyword>
<keyword id="KW-0472">Membrane</keyword>
<keyword id="KW-1185">Reference proteome</keyword>
<keyword id="KW-0730">Sialic acid</keyword>
<keyword id="KW-0812">Transmembrane</keyword>
<keyword id="KW-1133">Transmembrane helix</keyword>
<comment type="function">
    <text evidence="1">Component of the ankyrin-1 complex, a multiprotein complex involved in the stability and shape of the erythrocyte membrane. Glycophorin A is the major intrinsic membrane protein of the erythrocyte. The N-terminal glycosylated segment, which lies outside the erythrocyte membrane, has MN blood group receptors. Appears to be important for the function of SLC4A1 and is required for high activity of SLC4A1. May be involved in translocation of SLC4A1 to the plasma membrane.</text>
</comment>
<comment type="subunit">
    <text evidence="1">Homodimer. Component of the ankyrin-1 complex in the erythrocyte, composed of ANK1, RHCE, RHAG, SLC4A1, EPB42, GYPA, GYPB and AQP1. Interacts with SLC4A1; a GYPA monomer is bound at each end of the SLC4A1 dimer forming a heterotetramer.</text>
</comment>
<comment type="subcellular location">
    <subcellularLocation>
        <location>Membrane</location>
        <topology>Single-pass type I membrane protein</topology>
    </subcellularLocation>
</comment>
<comment type="similarity">
    <text evidence="4">Belongs to the glycophorin-A family.</text>
</comment>
<organism>
    <name type="scientific">Sus scrofa</name>
    <name type="common">Pig</name>
    <dbReference type="NCBI Taxonomy" id="9823"/>
    <lineage>
        <taxon>Eukaryota</taxon>
        <taxon>Metazoa</taxon>
        <taxon>Chordata</taxon>
        <taxon>Craniata</taxon>
        <taxon>Vertebrata</taxon>
        <taxon>Euteleostomi</taxon>
        <taxon>Mammalia</taxon>
        <taxon>Eutheria</taxon>
        <taxon>Laurasiatheria</taxon>
        <taxon>Artiodactyla</taxon>
        <taxon>Suina</taxon>
        <taxon>Suidae</taxon>
        <taxon>Sus</taxon>
    </lineage>
</organism>
<feature type="chain" id="PRO_0000149049" description="Glycophorin-A">
    <location>
        <begin position="1"/>
        <end position="133"/>
    </location>
</feature>
<feature type="topological domain" description="Extracellular">
    <location>
        <begin position="1"/>
        <end position="62"/>
    </location>
</feature>
<feature type="transmembrane region" description="Helical">
    <location>
        <begin position="63"/>
        <end position="85"/>
    </location>
</feature>
<feature type="topological domain" description="Cytoplasmic">
    <location>
        <begin position="86"/>
        <end position="133"/>
    </location>
</feature>
<feature type="region of interest" description="Disordered" evidence="2">
    <location>
        <begin position="1"/>
        <end position="34"/>
    </location>
</feature>
<feature type="region of interest" description="Disordered" evidence="2">
    <location>
        <begin position="93"/>
        <end position="133"/>
    </location>
</feature>
<feature type="glycosylation site" description="O-linked (GalNAc...) threonine" evidence="3">
    <location>
        <position position="1"/>
    </location>
</feature>
<feature type="glycosylation site" description="O-linked (GalNAc...) threonine" evidence="3">
    <location>
        <position position="6"/>
    </location>
</feature>
<feature type="glycosylation site" description="O-linked (GalNAc...) serine" evidence="3">
    <location>
        <position position="11"/>
    </location>
</feature>
<feature type="glycosylation site" description="O-linked (GalNAc...) threonine" evidence="3">
    <location>
        <position position="13"/>
    </location>
</feature>
<feature type="glycosylation site" description="N-linked (GlcNAc...) asparagine" evidence="3">
    <location>
        <position position="19"/>
    </location>
</feature>
<feature type="glycosylation site" description="O-linked (GalNAc...) threonine" evidence="3">
    <location>
        <position position="21"/>
    </location>
</feature>
<feature type="glycosylation site" description="O-linked (GalNAc...) threonine" evidence="3">
    <location>
        <position position="23"/>
    </location>
</feature>
<feature type="glycosylation site" description="O-linked (GalNAc...) threonine" evidence="3">
    <location>
        <position position="30"/>
    </location>
</feature>
<feature type="glycosylation site" description="O-linked (GalNAc...) serine" evidence="3">
    <location>
        <position position="31"/>
    </location>
</feature>
<feature type="glycosylation site" description="N-linked (GlcNAc...) asparagine" evidence="3">
    <location>
        <position position="39"/>
    </location>
</feature>
<feature type="glycosylation site" description="O-linked (GalNAc...) threonine" evidence="3">
    <location>
        <position position="41"/>
    </location>
</feature>
<feature type="glycosylation site" description="O-linked (GalNAc...) threonine" evidence="3">
    <location>
        <position position="48"/>
    </location>
</feature>